<dbReference type="EMBL" id="EF101892">
    <property type="protein sequence ID" value="ABL67723.1"/>
    <property type="molecule type" value="mRNA"/>
</dbReference>
<dbReference type="EMBL" id="AC017118">
    <property type="protein sequence ID" value="AAF25976.1"/>
    <property type="molecule type" value="Genomic_DNA"/>
</dbReference>
<dbReference type="EMBL" id="CP002684">
    <property type="protein sequence ID" value="AEE31527.1"/>
    <property type="molecule type" value="Genomic_DNA"/>
</dbReference>
<dbReference type="PIR" id="E86452">
    <property type="entry name" value="E86452"/>
</dbReference>
<dbReference type="RefSeq" id="NP_174554.1">
    <property type="nucleotide sequence ID" value="NM_103011.2"/>
</dbReference>
<dbReference type="SMR" id="Q9LPI7"/>
<dbReference type="BioGRID" id="25405">
    <property type="interactions" value="20"/>
</dbReference>
<dbReference type="IntAct" id="Q9LPI7">
    <property type="interactions" value="21"/>
</dbReference>
<dbReference type="STRING" id="3702.Q9LPI7"/>
<dbReference type="PaxDb" id="3702-AT1G32770.1"/>
<dbReference type="EnsemblPlants" id="AT1G32770.1">
    <property type="protein sequence ID" value="AT1G32770.1"/>
    <property type="gene ID" value="AT1G32770"/>
</dbReference>
<dbReference type="GeneID" id="840171"/>
<dbReference type="Gramene" id="AT1G32770.1">
    <property type="protein sequence ID" value="AT1G32770.1"/>
    <property type="gene ID" value="AT1G32770"/>
</dbReference>
<dbReference type="KEGG" id="ath:AT1G32770"/>
<dbReference type="Araport" id="AT1G32770"/>
<dbReference type="TAIR" id="AT1G32770">
    <property type="gene designation" value="NAC012"/>
</dbReference>
<dbReference type="eggNOG" id="ENOG502QSBA">
    <property type="taxonomic scope" value="Eukaryota"/>
</dbReference>
<dbReference type="HOGENOM" id="CLU_035664_1_2_1"/>
<dbReference type="InParanoid" id="Q9LPI7"/>
<dbReference type="OMA" id="DIAHSMH"/>
<dbReference type="PhylomeDB" id="Q9LPI7"/>
<dbReference type="PRO" id="PR:Q9LPI7"/>
<dbReference type="Proteomes" id="UP000006548">
    <property type="component" value="Chromosome 1"/>
</dbReference>
<dbReference type="ExpressionAtlas" id="Q9LPI7">
    <property type="expression patterns" value="baseline and differential"/>
</dbReference>
<dbReference type="GO" id="GO:0005634">
    <property type="term" value="C:nucleus"/>
    <property type="evidence" value="ECO:0000314"/>
    <property type="project" value="TAIR"/>
</dbReference>
<dbReference type="GO" id="GO:0003700">
    <property type="term" value="F:DNA-binding transcription factor activity"/>
    <property type="evidence" value="ECO:0000250"/>
    <property type="project" value="TAIR"/>
</dbReference>
<dbReference type="GO" id="GO:0043565">
    <property type="term" value="F:sequence-specific DNA binding"/>
    <property type="evidence" value="ECO:0000314"/>
    <property type="project" value="TAIR"/>
</dbReference>
<dbReference type="GO" id="GO:0000976">
    <property type="term" value="F:transcription cis-regulatory region binding"/>
    <property type="evidence" value="ECO:0000353"/>
    <property type="project" value="TAIR"/>
</dbReference>
<dbReference type="GO" id="GO:0010047">
    <property type="term" value="P:fruit dehiscence"/>
    <property type="evidence" value="ECO:0000315"/>
    <property type="project" value="TAIR"/>
</dbReference>
<dbReference type="GO" id="GO:0009834">
    <property type="term" value="P:plant-type secondary cell wall biogenesis"/>
    <property type="evidence" value="ECO:0000315"/>
    <property type="project" value="TAIR"/>
</dbReference>
<dbReference type="GO" id="GO:0045893">
    <property type="term" value="P:positive regulation of DNA-templated transcription"/>
    <property type="evidence" value="ECO:0000314"/>
    <property type="project" value="TAIR"/>
</dbReference>
<dbReference type="FunFam" id="2.170.150.80:FF:000003">
    <property type="entry name" value="NAC domain-containing protein"/>
    <property type="match status" value="1"/>
</dbReference>
<dbReference type="Gene3D" id="2.170.150.80">
    <property type="entry name" value="NAC domain"/>
    <property type="match status" value="1"/>
</dbReference>
<dbReference type="InterPro" id="IPR003441">
    <property type="entry name" value="NAC-dom"/>
</dbReference>
<dbReference type="InterPro" id="IPR036093">
    <property type="entry name" value="NAC_dom_sf"/>
</dbReference>
<dbReference type="PANTHER" id="PTHR31744:SF221">
    <property type="entry name" value="NAC DOMAIN-CONTAINING PROTEIN 43-LIKE"/>
    <property type="match status" value="1"/>
</dbReference>
<dbReference type="PANTHER" id="PTHR31744">
    <property type="entry name" value="PROTEIN CUP-SHAPED COTYLEDON 2-RELATED"/>
    <property type="match status" value="1"/>
</dbReference>
<dbReference type="Pfam" id="PF02365">
    <property type="entry name" value="NAM"/>
    <property type="match status" value="1"/>
</dbReference>
<dbReference type="SUPFAM" id="SSF101941">
    <property type="entry name" value="NAC domain"/>
    <property type="match status" value="1"/>
</dbReference>
<dbReference type="PROSITE" id="PS51005">
    <property type="entry name" value="NAC"/>
    <property type="match status" value="1"/>
</dbReference>
<sequence>MADNKVNLSINGQSKVPPGFRFHPTEEELLHYYLRKKVNSQKIDLDVIREVDLNKLEPWDIQEECRIGSTPQNDWYFFSHKDKKYPTGTRTNRATVAGFWKATGRDKIICSCVRRIGLRKTLVFYKGRAPHGQKSDWIMHEYRLDDTPMSNGYADVVTEDPMSYNEEGWVVCRVFRKKNYQKIDDCPKITLSSLPDDTEEEKGPTFHNTQNVTGLDHVLLYMDRTGSNICMPESQTTTQHQDDVLFMQLPSLETPKSESPVDQSFLTPSKLDFSPVQEKITERPVCSNWASLDRLVAWQLNNGHHNPCHRKSFDEEEENGDTMMQRWDLHWNNDDNVDLWSSFTESSSSLDPLLHLSV</sequence>
<proteinExistence type="evidence at transcript level"/>
<reference key="1">
    <citation type="journal article" date="2006" name="Plant Cell">
        <title>SND1, a NAC domain transcription factor, is a key regulator of secondary wall synthesis in fibers of Arabidopsis.</title>
        <authorList>
            <person name="Zhong R."/>
            <person name="Demura T."/>
            <person name="Ye Z.-H."/>
        </authorList>
    </citation>
    <scope>NUCLEOTIDE SEQUENCE [MRNA]</scope>
    <scope>FUNCTION</scope>
    <scope>TISSUE SPECIFICITY</scope>
</reference>
<reference key="2">
    <citation type="journal article" date="2000" name="Nature">
        <title>Sequence and analysis of chromosome 1 of the plant Arabidopsis thaliana.</title>
        <authorList>
            <person name="Theologis A."/>
            <person name="Ecker J.R."/>
            <person name="Palm C.J."/>
            <person name="Federspiel N.A."/>
            <person name="Kaul S."/>
            <person name="White O."/>
            <person name="Alonso J."/>
            <person name="Altafi H."/>
            <person name="Araujo R."/>
            <person name="Bowman C.L."/>
            <person name="Brooks S.Y."/>
            <person name="Buehler E."/>
            <person name="Chan A."/>
            <person name="Chao Q."/>
            <person name="Chen H."/>
            <person name="Cheuk R.F."/>
            <person name="Chin C.W."/>
            <person name="Chung M.K."/>
            <person name="Conn L."/>
            <person name="Conway A.B."/>
            <person name="Conway A.R."/>
            <person name="Creasy T.H."/>
            <person name="Dewar K."/>
            <person name="Dunn P."/>
            <person name="Etgu P."/>
            <person name="Feldblyum T.V."/>
            <person name="Feng J.-D."/>
            <person name="Fong B."/>
            <person name="Fujii C.Y."/>
            <person name="Gill J.E."/>
            <person name="Goldsmith A.D."/>
            <person name="Haas B."/>
            <person name="Hansen N.F."/>
            <person name="Hughes B."/>
            <person name="Huizar L."/>
            <person name="Hunter J.L."/>
            <person name="Jenkins J."/>
            <person name="Johnson-Hopson C."/>
            <person name="Khan S."/>
            <person name="Khaykin E."/>
            <person name="Kim C.J."/>
            <person name="Koo H.L."/>
            <person name="Kremenetskaia I."/>
            <person name="Kurtz D.B."/>
            <person name="Kwan A."/>
            <person name="Lam B."/>
            <person name="Langin-Hooper S."/>
            <person name="Lee A."/>
            <person name="Lee J.M."/>
            <person name="Lenz C.A."/>
            <person name="Li J.H."/>
            <person name="Li Y.-P."/>
            <person name="Lin X."/>
            <person name="Liu S.X."/>
            <person name="Liu Z.A."/>
            <person name="Luros J.S."/>
            <person name="Maiti R."/>
            <person name="Marziali A."/>
            <person name="Militscher J."/>
            <person name="Miranda M."/>
            <person name="Nguyen M."/>
            <person name="Nierman W.C."/>
            <person name="Osborne B.I."/>
            <person name="Pai G."/>
            <person name="Peterson J."/>
            <person name="Pham P.K."/>
            <person name="Rizzo M."/>
            <person name="Rooney T."/>
            <person name="Rowley D."/>
            <person name="Sakano H."/>
            <person name="Salzberg S.L."/>
            <person name="Schwartz J.R."/>
            <person name="Shinn P."/>
            <person name="Southwick A.M."/>
            <person name="Sun H."/>
            <person name="Tallon L.J."/>
            <person name="Tambunga G."/>
            <person name="Toriumi M.J."/>
            <person name="Town C.D."/>
            <person name="Utterback T."/>
            <person name="Van Aken S."/>
            <person name="Vaysberg M."/>
            <person name="Vysotskaia V.S."/>
            <person name="Walker M."/>
            <person name="Wu D."/>
            <person name="Yu G."/>
            <person name="Fraser C.M."/>
            <person name="Venter J.C."/>
            <person name="Davis R.W."/>
        </authorList>
    </citation>
    <scope>NUCLEOTIDE SEQUENCE [LARGE SCALE GENOMIC DNA]</scope>
    <source>
        <strain>cv. Columbia</strain>
    </source>
</reference>
<reference key="3">
    <citation type="journal article" date="2017" name="Plant J.">
        <title>Araport11: a complete reannotation of the Arabidopsis thaliana reference genome.</title>
        <authorList>
            <person name="Cheng C.Y."/>
            <person name="Krishnakumar V."/>
            <person name="Chan A.P."/>
            <person name="Thibaud-Nissen F."/>
            <person name="Schobel S."/>
            <person name="Town C.D."/>
        </authorList>
    </citation>
    <scope>GENOME REANNOTATION</scope>
    <source>
        <strain>cv. Columbia</strain>
    </source>
</reference>
<reference key="4">
    <citation type="journal article" date="2003" name="DNA Res.">
        <title>Comprehensive analysis of NAC family genes in Oryza sativa and Arabidopsis thaliana.</title>
        <authorList>
            <person name="Ooka H."/>
            <person name="Satoh K."/>
            <person name="Doi K."/>
            <person name="Nagata T."/>
            <person name="Otomo Y."/>
            <person name="Murakami K."/>
            <person name="Matsubara K."/>
            <person name="Osato N."/>
            <person name="Kawai J."/>
            <person name="Carninci P."/>
            <person name="Hayashizaki Y."/>
            <person name="Suzuki K."/>
            <person name="Kojima K."/>
            <person name="Takahara Y."/>
            <person name="Yamamoto K."/>
            <person name="Kikuchi S."/>
        </authorList>
    </citation>
    <scope>GENE FAMILY</scope>
    <scope>NOMENCLATURE</scope>
</reference>
<reference key="5">
    <citation type="journal article" date="2005" name="Plant Physiol.">
        <title>The xylem and phloem transcriptomes from secondary tissues of the Arabidopsis root-hypocotyl.</title>
        <authorList>
            <person name="Zhao C."/>
            <person name="Craig J.C."/>
            <person name="Petzold H.E."/>
            <person name="Dickerman A.W."/>
            <person name="Beers E.P."/>
        </authorList>
    </citation>
    <scope>TISSUE SPECIFICITY</scope>
</reference>
<reference key="6">
    <citation type="journal article" date="2007" name="Planta">
        <title>Two NAC domain transcription factors, SND1 and NST1, function redundantly in regulation of secondary wall synthesis in fibers of Arabidopsis.</title>
        <authorList>
            <person name="Zhong R."/>
            <person name="Richardson E.A."/>
            <person name="Ye Z.-H."/>
        </authorList>
    </citation>
    <scope>FUNCTION</scope>
</reference>
<reference key="7">
    <citation type="journal article" date="2007" name="Plant Cell">
        <title>NAC transcription factors, NST1 and NST3, are key regulators of the formation of secondary walls in woody tissues of Arabidopsis.</title>
        <authorList>
            <person name="Mitsuda N."/>
            <person name="Iwase A."/>
            <person name="Yamamoto H."/>
            <person name="Yoshida M."/>
            <person name="Seki M."/>
            <person name="Shinozaki K."/>
            <person name="Ohme-Takagi M."/>
        </authorList>
    </citation>
    <scope>FUNCTION</scope>
    <scope>TISSUE SPECIFICITY</scope>
</reference>
<reference key="8">
    <citation type="journal article" date="2007" name="Plant Cell">
        <title>The MYB46 transcription factor is a direct target of SND1 and regulates secondary wall biosynthesis in Arabidopsis.</title>
        <authorList>
            <person name="Zhong R."/>
            <person name="Richardson E.A."/>
            <person name="Ye Z.-H."/>
        </authorList>
    </citation>
    <scope>FUNCTION</scope>
</reference>
<reference key="9">
    <citation type="journal article" date="2007" name="Plant J.">
        <title>ANAC012, a member of the plant-specific NAC transcription factor family, negatively regulates xylary fiber development in Arabidopsis thaliana.</title>
        <authorList>
            <person name="Ko J.-H."/>
            <person name="Yang S.H."/>
            <person name="Park A.H."/>
            <person name="Lerouxel O."/>
            <person name="Han K.-H."/>
        </authorList>
    </citation>
    <scope>FUNCTION</scope>
    <scope>TISSUE SPECIFICITY</scope>
</reference>
<reference key="10">
    <citation type="journal article" date="2008" name="Plant Cell">
        <title>A battery of transcription factors involved in the regulation of secondary cell wall biosynthesis in Arabidopsis.</title>
        <authorList>
            <person name="Zhong R."/>
            <person name="Lee C."/>
            <person name="Zhou J."/>
            <person name="McCarthy R.L."/>
            <person name="Ye Z.H."/>
        </authorList>
    </citation>
    <scope>SUBCELLULAR LOCATION</scope>
</reference>
<feature type="chain" id="PRO_0000313829" description="NAC domain-containing protein 12">
    <location>
        <begin position="1"/>
        <end position="358"/>
    </location>
</feature>
<feature type="domain" description="NAC" evidence="1">
    <location>
        <begin position="16"/>
        <end position="177"/>
    </location>
</feature>
<feature type="DNA-binding region" evidence="1">
    <location>
        <begin position="116"/>
        <end position="183"/>
    </location>
</feature>
<gene>
    <name evidence="12" type="primary">NAC012</name>
    <name evidence="11" type="synonym">NST3</name>
    <name evidence="10" type="synonym">SND1</name>
    <name type="ordered locus">At1g32770</name>
    <name type="ORF">F6N18.15</name>
</gene>
<protein>
    <recommendedName>
        <fullName evidence="9">NAC domain-containing protein 12</fullName>
        <shortName evidence="9">ANAC012</shortName>
    </recommendedName>
    <alternativeName>
        <fullName evidence="11">Protein NAC SECONDARY WALL THICKENING PROMOTING 3</fullName>
    </alternativeName>
    <alternativeName>
        <fullName evidence="10">Protein SECONDARY WALL-ASSOCIATED NAC DOMAIN PROTEIN 1</fullName>
    </alternativeName>
</protein>
<accession>Q9LPI7</accession>
<keyword id="KW-0010">Activator</keyword>
<keyword id="KW-0238">DNA-binding</keyword>
<keyword id="KW-0539">Nucleus</keyword>
<keyword id="KW-1185">Reference proteome</keyword>
<keyword id="KW-0804">Transcription</keyword>
<keyword id="KW-0805">Transcription regulation</keyword>
<comment type="function">
    <text evidence="3 4 5 6 7">Transcriptional activator of genes involved in biosynthesis of secondary walls. Together with NST1, required for the secondary cell wall thickening and lignification of sclerenchymatous fibers and secondary xylem vessels (tracheary elements). Seems to repress the secondary cell wall thickening of xylary fibers. May also regulate the secondary cell wall lignification of other tissues. Binds to and activates the promoter of MYB46.</text>
</comment>
<comment type="subcellular location">
    <subcellularLocation>
        <location evidence="1 8">Nucleus</location>
    </subcellularLocation>
</comment>
<comment type="tissue specificity">
    <text evidence="2 3 4 6">Stems and roots, specifically in interfascicular fibers (sclerenchyma), cells differentiating into vascular vessels (cambium), and xylem.</text>
</comment>
<comment type="domain">
    <text evidence="1">The NAC domain includes a DNA-binding domain and a dimerization domain.</text>
</comment>
<organism>
    <name type="scientific">Arabidopsis thaliana</name>
    <name type="common">Mouse-ear cress</name>
    <dbReference type="NCBI Taxonomy" id="3702"/>
    <lineage>
        <taxon>Eukaryota</taxon>
        <taxon>Viridiplantae</taxon>
        <taxon>Streptophyta</taxon>
        <taxon>Embryophyta</taxon>
        <taxon>Tracheophyta</taxon>
        <taxon>Spermatophyta</taxon>
        <taxon>Magnoliopsida</taxon>
        <taxon>eudicotyledons</taxon>
        <taxon>Gunneridae</taxon>
        <taxon>Pentapetalae</taxon>
        <taxon>rosids</taxon>
        <taxon>malvids</taxon>
        <taxon>Brassicales</taxon>
        <taxon>Brassicaceae</taxon>
        <taxon>Camelineae</taxon>
        <taxon>Arabidopsis</taxon>
    </lineage>
</organism>
<name>NAC12_ARATH</name>
<evidence type="ECO:0000255" key="1">
    <source>
        <dbReference type="PROSITE-ProRule" id="PRU00353"/>
    </source>
</evidence>
<evidence type="ECO:0000269" key="2">
    <source>
    </source>
</evidence>
<evidence type="ECO:0000269" key="3">
    <source>
    </source>
</evidence>
<evidence type="ECO:0000269" key="4">
    <source>
    </source>
</evidence>
<evidence type="ECO:0000269" key="5">
    <source>
    </source>
</evidence>
<evidence type="ECO:0000269" key="6">
    <source>
    </source>
</evidence>
<evidence type="ECO:0000269" key="7">
    <source>
    </source>
</evidence>
<evidence type="ECO:0000269" key="8">
    <source>
    </source>
</evidence>
<evidence type="ECO:0000303" key="9">
    <source>
    </source>
</evidence>
<evidence type="ECO:0000303" key="10">
    <source>
    </source>
</evidence>
<evidence type="ECO:0000303" key="11">
    <source>
    </source>
</evidence>
<evidence type="ECO:0000312" key="12">
    <source>
        <dbReference type="EMBL" id="AEE31527.1"/>
    </source>
</evidence>